<reference key="1">
    <citation type="journal article" date="2009" name="J. Bacteriol.">
        <title>Complete and draft genome sequences of six members of the Aquificales.</title>
        <authorList>
            <person name="Reysenbach A.-L."/>
            <person name="Hamamura N."/>
            <person name="Podar M."/>
            <person name="Griffiths E."/>
            <person name="Ferreira S."/>
            <person name="Hochstein R."/>
            <person name="Heidelberg J."/>
            <person name="Johnson J."/>
            <person name="Mead D."/>
            <person name="Pohorille A."/>
            <person name="Sarmiento M."/>
            <person name="Schweighofer K."/>
            <person name="Seshadri R."/>
            <person name="Voytek M.A."/>
        </authorList>
    </citation>
    <scope>NUCLEOTIDE SEQUENCE [LARGE SCALE GENOMIC DNA]</scope>
    <source>
        <strain>YO3AOP1</strain>
    </source>
</reference>
<keyword id="KW-0678">Repressor</keyword>
<keyword id="KW-0687">Ribonucleoprotein</keyword>
<keyword id="KW-0689">Ribosomal protein</keyword>
<keyword id="KW-0694">RNA-binding</keyword>
<keyword id="KW-0699">rRNA-binding</keyword>
<keyword id="KW-0810">Translation regulation</keyword>
<keyword id="KW-0820">tRNA-binding</keyword>
<protein>
    <recommendedName>
        <fullName evidence="1">Large ribosomal subunit protein uL1</fullName>
    </recommendedName>
    <alternativeName>
        <fullName evidence="2">50S ribosomal protein L1</fullName>
    </alternativeName>
</protein>
<gene>
    <name evidence="1" type="primary">rplA</name>
    <name type="ordered locus">SYO3AOP1_0301</name>
</gene>
<organism>
    <name type="scientific">Sulfurihydrogenibium sp. (strain YO3AOP1)</name>
    <dbReference type="NCBI Taxonomy" id="436114"/>
    <lineage>
        <taxon>Bacteria</taxon>
        <taxon>Pseudomonadati</taxon>
        <taxon>Aquificota</taxon>
        <taxon>Aquificia</taxon>
        <taxon>Aquificales</taxon>
        <taxon>Hydrogenothermaceae</taxon>
        <taxon>Sulfurihydrogenibium</taxon>
    </lineage>
</organism>
<name>RL1_SULSY</name>
<dbReference type="EMBL" id="CP001080">
    <property type="protein sequence ID" value="ACD65946.1"/>
    <property type="molecule type" value="Genomic_DNA"/>
</dbReference>
<dbReference type="RefSeq" id="WP_012459034.1">
    <property type="nucleotide sequence ID" value="NC_010730.1"/>
</dbReference>
<dbReference type="SMR" id="B2V7M3"/>
<dbReference type="STRING" id="436114.SYO3AOP1_0301"/>
<dbReference type="KEGG" id="sul:SYO3AOP1_0301"/>
<dbReference type="eggNOG" id="COG0081">
    <property type="taxonomic scope" value="Bacteria"/>
</dbReference>
<dbReference type="HOGENOM" id="CLU_062853_0_0_0"/>
<dbReference type="GO" id="GO:0015934">
    <property type="term" value="C:large ribosomal subunit"/>
    <property type="evidence" value="ECO:0007669"/>
    <property type="project" value="InterPro"/>
</dbReference>
<dbReference type="GO" id="GO:0019843">
    <property type="term" value="F:rRNA binding"/>
    <property type="evidence" value="ECO:0007669"/>
    <property type="project" value="UniProtKB-UniRule"/>
</dbReference>
<dbReference type="GO" id="GO:0003735">
    <property type="term" value="F:structural constituent of ribosome"/>
    <property type="evidence" value="ECO:0007669"/>
    <property type="project" value="InterPro"/>
</dbReference>
<dbReference type="GO" id="GO:0000049">
    <property type="term" value="F:tRNA binding"/>
    <property type="evidence" value="ECO:0007669"/>
    <property type="project" value="UniProtKB-KW"/>
</dbReference>
<dbReference type="GO" id="GO:0006417">
    <property type="term" value="P:regulation of translation"/>
    <property type="evidence" value="ECO:0007669"/>
    <property type="project" value="UniProtKB-KW"/>
</dbReference>
<dbReference type="GO" id="GO:0006412">
    <property type="term" value="P:translation"/>
    <property type="evidence" value="ECO:0007669"/>
    <property type="project" value="UniProtKB-UniRule"/>
</dbReference>
<dbReference type="CDD" id="cd00403">
    <property type="entry name" value="Ribosomal_L1"/>
    <property type="match status" value="1"/>
</dbReference>
<dbReference type="FunFam" id="3.40.50.790:FF:000001">
    <property type="entry name" value="50S ribosomal protein L1"/>
    <property type="match status" value="1"/>
</dbReference>
<dbReference type="Gene3D" id="3.30.190.20">
    <property type="match status" value="1"/>
</dbReference>
<dbReference type="Gene3D" id="3.40.50.790">
    <property type="match status" value="1"/>
</dbReference>
<dbReference type="HAMAP" id="MF_01318_B">
    <property type="entry name" value="Ribosomal_uL1_B"/>
    <property type="match status" value="1"/>
</dbReference>
<dbReference type="InterPro" id="IPR005878">
    <property type="entry name" value="Ribosom_uL1_bac-type"/>
</dbReference>
<dbReference type="InterPro" id="IPR002143">
    <property type="entry name" value="Ribosomal_uL1"/>
</dbReference>
<dbReference type="InterPro" id="IPR023674">
    <property type="entry name" value="Ribosomal_uL1-like"/>
</dbReference>
<dbReference type="InterPro" id="IPR028364">
    <property type="entry name" value="Ribosomal_uL1/biogenesis"/>
</dbReference>
<dbReference type="InterPro" id="IPR016095">
    <property type="entry name" value="Ribosomal_uL1_3-a/b-sand"/>
</dbReference>
<dbReference type="InterPro" id="IPR023673">
    <property type="entry name" value="Ribosomal_uL1_CS"/>
</dbReference>
<dbReference type="NCBIfam" id="TIGR01169">
    <property type="entry name" value="rplA_bact"/>
    <property type="match status" value="1"/>
</dbReference>
<dbReference type="PANTHER" id="PTHR36427">
    <property type="entry name" value="54S RIBOSOMAL PROTEIN L1, MITOCHONDRIAL"/>
    <property type="match status" value="1"/>
</dbReference>
<dbReference type="PANTHER" id="PTHR36427:SF3">
    <property type="entry name" value="LARGE RIBOSOMAL SUBUNIT PROTEIN UL1M"/>
    <property type="match status" value="1"/>
</dbReference>
<dbReference type="Pfam" id="PF00687">
    <property type="entry name" value="Ribosomal_L1"/>
    <property type="match status" value="1"/>
</dbReference>
<dbReference type="PIRSF" id="PIRSF002155">
    <property type="entry name" value="Ribosomal_L1"/>
    <property type="match status" value="1"/>
</dbReference>
<dbReference type="SUPFAM" id="SSF56808">
    <property type="entry name" value="Ribosomal protein L1"/>
    <property type="match status" value="1"/>
</dbReference>
<dbReference type="PROSITE" id="PS01199">
    <property type="entry name" value="RIBOSOMAL_L1"/>
    <property type="match status" value="1"/>
</dbReference>
<evidence type="ECO:0000255" key="1">
    <source>
        <dbReference type="HAMAP-Rule" id="MF_01318"/>
    </source>
</evidence>
<evidence type="ECO:0000305" key="2"/>
<sequence>MAKRGKKYLEALKLIDKEKTYSLDEAIQKLKEVEKILQRKFDETVELIFRLGVDPKYADQMVRGSVVLPHGLGRELKVLVIASGEKLKEAEEAGADYAGGEEIINKIANENWIDFDIVIATPDMMPKLAKLGKILGPRGLMPNPKVGTVTTDVKRAVTEAKKGRVEFKVDKTGNLHVPVGKISFEDHKLKENILAVVDAVLKAKPPGAKGQYIRNVVLKTTMSPSVKLNPAELQKALETKAA</sequence>
<feature type="chain" id="PRO_1000141471" description="Large ribosomal subunit protein uL1">
    <location>
        <begin position="1"/>
        <end position="242"/>
    </location>
</feature>
<comment type="function">
    <text evidence="1">Binds directly to 23S rRNA. The L1 stalk is quite mobile in the ribosome, and is involved in E site tRNA release.</text>
</comment>
<comment type="function">
    <text evidence="1">Protein L1 is also a translational repressor protein, it controls the translation of the L11 operon by binding to its mRNA.</text>
</comment>
<comment type="subunit">
    <text evidence="1">Part of the 50S ribosomal subunit.</text>
</comment>
<comment type="similarity">
    <text evidence="1">Belongs to the universal ribosomal protein uL1 family.</text>
</comment>
<accession>B2V7M3</accession>
<proteinExistence type="inferred from homology"/>